<proteinExistence type="evidence at protein level"/>
<dbReference type="EC" id="1.1.1.29"/>
<dbReference type="EMBL" id="D85339">
    <property type="protein sequence ID" value="BAA19751.1"/>
    <property type="molecule type" value="mRNA"/>
</dbReference>
<dbReference type="EMBL" id="AC012563">
    <property type="protein sequence ID" value="AAG52006.1"/>
    <property type="molecule type" value="Genomic_DNA"/>
</dbReference>
<dbReference type="EMBL" id="CP002684">
    <property type="protein sequence ID" value="AEE34735.1"/>
    <property type="molecule type" value="Genomic_DNA"/>
</dbReference>
<dbReference type="EMBL" id="CP002684">
    <property type="protein sequence ID" value="AEE34736.1"/>
    <property type="molecule type" value="Genomic_DNA"/>
</dbReference>
<dbReference type="EMBL" id="AF370221">
    <property type="protein sequence ID" value="AAK44036.1"/>
    <property type="molecule type" value="mRNA"/>
</dbReference>
<dbReference type="EMBL" id="AY099552">
    <property type="protein sequence ID" value="AAM20404.1"/>
    <property type="molecule type" value="mRNA"/>
</dbReference>
<dbReference type="EMBL" id="AY113871">
    <property type="protein sequence ID" value="AAM44919.1"/>
    <property type="molecule type" value="mRNA"/>
</dbReference>
<dbReference type="EMBL" id="BT001237">
    <property type="protein sequence ID" value="AAN65124.1"/>
    <property type="molecule type" value="mRNA"/>
</dbReference>
<dbReference type="EMBL" id="AK226564">
    <property type="protein sequence ID" value="BAE98694.1"/>
    <property type="molecule type" value="mRNA"/>
</dbReference>
<dbReference type="EMBL" id="AK317543">
    <property type="protein sequence ID" value="BAH20207.1"/>
    <property type="molecule type" value="mRNA"/>
</dbReference>
<dbReference type="PIR" id="B96703">
    <property type="entry name" value="B96703"/>
</dbReference>
<dbReference type="RefSeq" id="NP_001185349.1">
    <molecule id="Q9C9W5-2"/>
    <property type="nucleotide sequence ID" value="NM_001198420.1"/>
</dbReference>
<dbReference type="RefSeq" id="NP_176968.1">
    <molecule id="Q9C9W5-1"/>
    <property type="nucleotide sequence ID" value="NM_105471.4"/>
</dbReference>
<dbReference type="SMR" id="Q9C9W5"/>
<dbReference type="BioGRID" id="28350">
    <property type="interactions" value="3"/>
</dbReference>
<dbReference type="FunCoup" id="Q9C9W5">
    <property type="interactions" value="1101"/>
</dbReference>
<dbReference type="IntAct" id="Q9C9W5">
    <property type="interactions" value="2"/>
</dbReference>
<dbReference type="STRING" id="3702.Q9C9W5"/>
<dbReference type="iPTMnet" id="Q9C9W5"/>
<dbReference type="MetOSite" id="Q9C9W5"/>
<dbReference type="PaxDb" id="3702-AT1G68010.2"/>
<dbReference type="ProMEX" id="Q9C9W5"/>
<dbReference type="ProteomicsDB" id="232150">
    <molecule id="Q9C9W5-1"/>
</dbReference>
<dbReference type="EnsemblPlants" id="AT1G68010.1">
    <molecule id="Q9C9W5-1"/>
    <property type="protein sequence ID" value="AT1G68010.1"/>
    <property type="gene ID" value="AT1G68010"/>
</dbReference>
<dbReference type="EnsemblPlants" id="AT1G68010.2">
    <molecule id="Q9C9W5-2"/>
    <property type="protein sequence ID" value="AT1G68010.2"/>
    <property type="gene ID" value="AT1G68010"/>
</dbReference>
<dbReference type="GeneID" id="843129"/>
<dbReference type="Gramene" id="AT1G68010.1">
    <molecule id="Q9C9W5-1"/>
    <property type="protein sequence ID" value="AT1G68010.1"/>
    <property type="gene ID" value="AT1G68010"/>
</dbReference>
<dbReference type="Gramene" id="AT1G68010.2">
    <molecule id="Q9C9W5-2"/>
    <property type="protein sequence ID" value="AT1G68010.2"/>
    <property type="gene ID" value="AT1G68010"/>
</dbReference>
<dbReference type="KEGG" id="ath:AT1G68010"/>
<dbReference type="Araport" id="AT1G68010"/>
<dbReference type="TAIR" id="AT1G68010">
    <property type="gene designation" value="HPR"/>
</dbReference>
<dbReference type="eggNOG" id="KOG0069">
    <property type="taxonomic scope" value="Eukaryota"/>
</dbReference>
<dbReference type="HOGENOM" id="CLU_019796_1_2_1"/>
<dbReference type="InParanoid" id="Q9C9W5"/>
<dbReference type="PhylomeDB" id="Q9C9W5"/>
<dbReference type="BioCyc" id="ARA:AT1G68010-MONOMER"/>
<dbReference type="BioCyc" id="MetaCyc:AT1G68010-MONOMER"/>
<dbReference type="BRENDA" id="1.1.1.26">
    <property type="organism ID" value="399"/>
</dbReference>
<dbReference type="BRENDA" id="1.1.1.29">
    <property type="organism ID" value="399"/>
</dbReference>
<dbReference type="BRENDA" id="1.1.1.81">
    <property type="organism ID" value="399"/>
</dbReference>
<dbReference type="UniPathway" id="UPA00951">
    <property type="reaction ID" value="UER00916"/>
</dbReference>
<dbReference type="CD-CODE" id="4299E36E">
    <property type="entry name" value="Nucleolus"/>
</dbReference>
<dbReference type="PRO" id="PR:Q9C9W5"/>
<dbReference type="Proteomes" id="UP000006548">
    <property type="component" value="Chromosome 1"/>
</dbReference>
<dbReference type="ExpressionAtlas" id="Q9C9W5">
    <property type="expression patterns" value="baseline and differential"/>
</dbReference>
<dbReference type="GO" id="GO:0048046">
    <property type="term" value="C:apoplast"/>
    <property type="evidence" value="ECO:0007005"/>
    <property type="project" value="TAIR"/>
</dbReference>
<dbReference type="GO" id="GO:0009507">
    <property type="term" value="C:chloroplast"/>
    <property type="evidence" value="ECO:0007005"/>
    <property type="project" value="TAIR"/>
</dbReference>
<dbReference type="GO" id="GO:0005829">
    <property type="term" value="C:cytosol"/>
    <property type="evidence" value="ECO:0007005"/>
    <property type="project" value="TAIR"/>
</dbReference>
<dbReference type="GO" id="GO:0005739">
    <property type="term" value="C:mitochondrion"/>
    <property type="evidence" value="ECO:0007005"/>
    <property type="project" value="TAIR"/>
</dbReference>
<dbReference type="GO" id="GO:0005777">
    <property type="term" value="C:peroxisome"/>
    <property type="evidence" value="ECO:0000314"/>
    <property type="project" value="TAIR"/>
</dbReference>
<dbReference type="GO" id="GO:0008465">
    <property type="term" value="F:hydroxypyruvate reductase (NADH) activity"/>
    <property type="evidence" value="ECO:0000314"/>
    <property type="project" value="UniProtKB"/>
</dbReference>
<dbReference type="GO" id="GO:0003729">
    <property type="term" value="F:mRNA binding"/>
    <property type="evidence" value="ECO:0000314"/>
    <property type="project" value="TAIR"/>
</dbReference>
<dbReference type="GO" id="GO:0051287">
    <property type="term" value="F:NAD binding"/>
    <property type="evidence" value="ECO:0007669"/>
    <property type="project" value="InterPro"/>
</dbReference>
<dbReference type="GO" id="GO:0008266">
    <property type="term" value="F:poly(U) RNA binding"/>
    <property type="evidence" value="ECO:0000314"/>
    <property type="project" value="TAIR"/>
</dbReference>
<dbReference type="GO" id="GO:0071482">
    <property type="term" value="P:cellular response to light stimulus"/>
    <property type="evidence" value="ECO:0000270"/>
    <property type="project" value="UniProtKB"/>
</dbReference>
<dbReference type="GO" id="GO:0042631">
    <property type="term" value="P:cellular response to water deprivation"/>
    <property type="evidence" value="ECO:0000270"/>
    <property type="project" value="UniProtKB"/>
</dbReference>
<dbReference type="GO" id="GO:0009854">
    <property type="term" value="P:oxidative photosynthetic carbon pathway"/>
    <property type="evidence" value="ECO:0000315"/>
    <property type="project" value="UniProtKB"/>
</dbReference>
<dbReference type="CDD" id="cd05301">
    <property type="entry name" value="GDH"/>
    <property type="match status" value="1"/>
</dbReference>
<dbReference type="FunFam" id="3.40.50.720:FF:000207">
    <property type="entry name" value="Glycerate dehydrogenase HPR, peroxisomal"/>
    <property type="match status" value="1"/>
</dbReference>
<dbReference type="Gene3D" id="3.40.50.720">
    <property type="entry name" value="NAD(P)-binding Rossmann-like Domain"/>
    <property type="match status" value="2"/>
</dbReference>
<dbReference type="InterPro" id="IPR050223">
    <property type="entry name" value="D-isomer_2-hydroxyacid_DH"/>
</dbReference>
<dbReference type="InterPro" id="IPR006139">
    <property type="entry name" value="D-isomer_2_OHA_DH_cat_dom"/>
</dbReference>
<dbReference type="InterPro" id="IPR029752">
    <property type="entry name" value="D-isomer_DH_CS1"/>
</dbReference>
<dbReference type="InterPro" id="IPR006140">
    <property type="entry name" value="D-isomer_DH_NAD-bd"/>
</dbReference>
<dbReference type="InterPro" id="IPR036291">
    <property type="entry name" value="NAD(P)-bd_dom_sf"/>
</dbReference>
<dbReference type="PANTHER" id="PTHR10996">
    <property type="entry name" value="2-HYDROXYACID DEHYDROGENASE-RELATED"/>
    <property type="match status" value="1"/>
</dbReference>
<dbReference type="PANTHER" id="PTHR10996:SF257">
    <property type="entry name" value="GLYOXYLATE REDUCTASE 1"/>
    <property type="match status" value="1"/>
</dbReference>
<dbReference type="Pfam" id="PF00389">
    <property type="entry name" value="2-Hacid_dh"/>
    <property type="match status" value="1"/>
</dbReference>
<dbReference type="Pfam" id="PF02826">
    <property type="entry name" value="2-Hacid_dh_C"/>
    <property type="match status" value="1"/>
</dbReference>
<dbReference type="SUPFAM" id="SSF52283">
    <property type="entry name" value="Formate/glycerate dehydrogenase catalytic domain-like"/>
    <property type="match status" value="1"/>
</dbReference>
<dbReference type="SUPFAM" id="SSF51735">
    <property type="entry name" value="NAD(P)-binding Rossmann-fold domains"/>
    <property type="match status" value="1"/>
</dbReference>
<dbReference type="PROSITE" id="PS00065">
    <property type="entry name" value="D_2_HYDROXYACID_DH_1"/>
    <property type="match status" value="1"/>
</dbReference>
<accession>Q9C9W5</accession>
<accession>B9DHJ0</accession>
<accession>F4HVJ9</accession>
<accession>O04213</accession>
<protein>
    <recommendedName>
        <fullName>Glycerate dehydrogenase HPR, peroxisomal</fullName>
        <shortName>GDH</shortName>
        <ecNumber>1.1.1.29</ecNumber>
    </recommendedName>
    <alternativeName>
        <fullName>NADH-dependent hydroxypyruvate reductase 1</fullName>
        <shortName>AtHPR1</shortName>
        <shortName>HPR 1</shortName>
    </alternativeName>
</protein>
<comment type="function">
    <text evidence="3 5 6 7">Catalyzes the NADH-dependent reduction of hydroxypyruvate into glycerate in the photorespiratory core cycle. Mediates fatty acid beta-oxidation in germinating seeds when malate dehydrogenase is absent.</text>
</comment>
<comment type="catalytic activity">
    <reaction evidence="3 4">
        <text>(R)-glycerate + NAD(+) = 3-hydroxypyruvate + NADH + H(+)</text>
        <dbReference type="Rhea" id="RHEA:17905"/>
        <dbReference type="ChEBI" id="CHEBI:15378"/>
        <dbReference type="ChEBI" id="CHEBI:16659"/>
        <dbReference type="ChEBI" id="CHEBI:17180"/>
        <dbReference type="ChEBI" id="CHEBI:57540"/>
        <dbReference type="ChEBI" id="CHEBI:57945"/>
        <dbReference type="EC" id="1.1.1.29"/>
    </reaction>
</comment>
<comment type="activity regulation">
    <text evidence="3">Slightly inhibited by oxalate.</text>
</comment>
<comment type="pathway">
    <text>Photosynthesis; photorespiration; 3-phospho-D-glycerate from glycine: step 3/4.</text>
</comment>
<comment type="subcellular location">
    <subcellularLocation>
        <location evidence="8">Peroxisome</location>
    </subcellularLocation>
</comment>
<comment type="alternative products">
    <event type="alternative splicing"/>
    <isoform>
        <id>Q9C9W5-1</id>
        <name>1</name>
        <sequence type="displayed"/>
    </isoform>
    <isoform>
        <id>Q9C9W5-2</id>
        <name>2</name>
        <sequence type="described" ref="VSP_044376"/>
    </isoform>
</comment>
<comment type="tissue specificity">
    <text evidence="4 8">Present in leaves (at protein level). Mostly expressed in photosynthetic tissues such as leaves, stems, flowers, buds, and, to a lower extent, in siliques and roots.</text>
</comment>
<comment type="induction">
    <text evidence="4">Induced by drought. Accumulates in response to light, but transiently repressed in darkness.</text>
</comment>
<comment type="disruption phenotype">
    <text evidence="3 7">Very low NADH-dependent hydroxypyruvate reductase activity in leaves. Under short days, slower growth and delayed bolting. Slight accumulation of metabolites with long turnover half-times that become dissimilated during the dark. Perturbated photorespiration-related gas exchange. When associated with HPR2 disruption, strong air-sensitivity and dramatic reduction in photosynthetic performance.</text>
</comment>
<comment type="similarity">
    <text evidence="9">Belongs to the D-isomer specific 2-hydroxyacid dehydrogenase family.</text>
</comment>
<gene>
    <name type="primary">HPR</name>
    <name type="ordered locus">At1g68010</name>
    <name type="ORF">T23K23.14</name>
</gene>
<feature type="chain" id="PRO_0000419951" description="Glycerate dehydrogenase HPR, peroxisomal">
    <location>
        <begin position="1"/>
        <end position="386"/>
    </location>
</feature>
<feature type="short sequence motif" description="Microbody targeting signal" evidence="2">
    <location>
        <begin position="384"/>
        <end position="386"/>
    </location>
</feature>
<feature type="active site" evidence="1">
    <location>
        <position position="273"/>
    </location>
</feature>
<feature type="active site" evidence="1">
    <location>
        <position position="302"/>
    </location>
</feature>
<feature type="active site" description="Proton donor" evidence="1">
    <location>
        <position position="320"/>
    </location>
</feature>
<feature type="binding site" evidence="1">
    <location>
        <begin position="175"/>
        <end position="176"/>
    </location>
    <ligand>
        <name>NAD(+)</name>
        <dbReference type="ChEBI" id="CHEBI:57540"/>
    </ligand>
</feature>
<feature type="binding site" evidence="1">
    <location>
        <begin position="271"/>
        <end position="273"/>
    </location>
    <ligand>
        <name>NAD(+)</name>
        <dbReference type="ChEBI" id="CHEBI:57540"/>
    </ligand>
</feature>
<feature type="binding site" evidence="1">
    <location>
        <position position="297"/>
    </location>
    <ligand>
        <name>NAD(+)</name>
        <dbReference type="ChEBI" id="CHEBI:57540"/>
    </ligand>
</feature>
<feature type="binding site" evidence="1">
    <location>
        <begin position="320"/>
        <end position="323"/>
    </location>
    <ligand>
        <name>NAD(+)</name>
        <dbReference type="ChEBI" id="CHEBI:57540"/>
    </ligand>
</feature>
<feature type="splice variant" id="VSP_044376" description="In isoform 2." evidence="9">
    <original>K</original>
    <variation>KV</variation>
    <location>
        <position position="264"/>
    </location>
</feature>
<feature type="sequence conflict" description="In Ref. 1; BAA19751." evidence="9" ref="1">
    <original>D</original>
    <variation>H</variation>
    <location>
        <position position="278"/>
    </location>
</feature>
<feature type="sequence conflict" description="In Ref. 1; BAA19751." evidence="9" ref="1">
    <original>T</original>
    <variation>M</variation>
    <location>
        <position position="312"/>
    </location>
</feature>
<evidence type="ECO:0000250" key="1"/>
<evidence type="ECO:0000255" key="2"/>
<evidence type="ECO:0000269" key="3">
    <source>
    </source>
</evidence>
<evidence type="ECO:0000269" key="4">
    <source>
    </source>
</evidence>
<evidence type="ECO:0000269" key="5">
    <source>
    </source>
</evidence>
<evidence type="ECO:0000269" key="6">
    <source>
    </source>
</evidence>
<evidence type="ECO:0000269" key="7">
    <source>
    </source>
</evidence>
<evidence type="ECO:0000269" key="8">
    <source>
    </source>
</evidence>
<evidence type="ECO:0000305" key="9"/>
<name>HPR1_ARATH</name>
<sequence length="386" mass="42248">MAKPVSIEVYNPNGKYRVVSTKPMPGTRWINLLVDQGCRVEICHLKKTILSVEDIIDLIGDKCDGVIGQLTEDWGETLFSALSKAGGKAFSNMAVGYNNVDVEAANKYGIAVGNTPGVLTETTAELAASLSLAAARRIVEADEFMRGGLYEGWLPHLFVGNLLKGQTVGVIGAGRIGSAYARMMVEGFKMNLIYFDLYQSTRLEKFVTAYGQFLKANGEQPVTWKRASSMEEVLREADLISLHPVLDKTTYHLVNKERLAMMKKEAILVNCSRGPVIDEAALVEHLKENPMFRVGLDVFEEEPFMKPGLADTKNAIVVPHIASASKWTREGMATLAALNVLGRVKGYPIWHDPNRVDPFLNENASPPNASPSIVNSKALGLPVSKL</sequence>
<reference key="1">
    <citation type="journal article" date="1997" name="Plant Cell Physiol.">
        <title>Hydroxypyruvate reductase with a carboxy-terminal targeting signal to microbodies is expressed in Arabidopsis.</title>
        <authorList>
            <person name="Mano S."/>
            <person name="Hayashi M."/>
            <person name="Kondo M."/>
            <person name="Nishimura M."/>
        </authorList>
    </citation>
    <scope>NUCLEOTIDE SEQUENCE [MRNA]</scope>
    <scope>SUBCELLULAR LOCATION</scope>
    <scope>MICROBODY TARGETING SIGNAL</scope>
    <scope>TISSUE SPECIFICITY</scope>
    <source>
        <strain>cv. Columbia</strain>
    </source>
</reference>
<reference key="2">
    <citation type="journal article" date="2000" name="Nature">
        <title>Sequence and analysis of chromosome 1 of the plant Arabidopsis thaliana.</title>
        <authorList>
            <person name="Theologis A."/>
            <person name="Ecker J.R."/>
            <person name="Palm C.J."/>
            <person name="Federspiel N.A."/>
            <person name="Kaul S."/>
            <person name="White O."/>
            <person name="Alonso J."/>
            <person name="Altafi H."/>
            <person name="Araujo R."/>
            <person name="Bowman C.L."/>
            <person name="Brooks S.Y."/>
            <person name="Buehler E."/>
            <person name="Chan A."/>
            <person name="Chao Q."/>
            <person name="Chen H."/>
            <person name="Cheuk R.F."/>
            <person name="Chin C.W."/>
            <person name="Chung M.K."/>
            <person name="Conn L."/>
            <person name="Conway A.B."/>
            <person name="Conway A.R."/>
            <person name="Creasy T.H."/>
            <person name="Dewar K."/>
            <person name="Dunn P."/>
            <person name="Etgu P."/>
            <person name="Feldblyum T.V."/>
            <person name="Feng J.-D."/>
            <person name="Fong B."/>
            <person name="Fujii C.Y."/>
            <person name="Gill J.E."/>
            <person name="Goldsmith A.D."/>
            <person name="Haas B."/>
            <person name="Hansen N.F."/>
            <person name="Hughes B."/>
            <person name="Huizar L."/>
            <person name="Hunter J.L."/>
            <person name="Jenkins J."/>
            <person name="Johnson-Hopson C."/>
            <person name="Khan S."/>
            <person name="Khaykin E."/>
            <person name="Kim C.J."/>
            <person name="Koo H.L."/>
            <person name="Kremenetskaia I."/>
            <person name="Kurtz D.B."/>
            <person name="Kwan A."/>
            <person name="Lam B."/>
            <person name="Langin-Hooper S."/>
            <person name="Lee A."/>
            <person name="Lee J.M."/>
            <person name="Lenz C.A."/>
            <person name="Li J.H."/>
            <person name="Li Y.-P."/>
            <person name="Lin X."/>
            <person name="Liu S.X."/>
            <person name="Liu Z.A."/>
            <person name="Luros J.S."/>
            <person name="Maiti R."/>
            <person name="Marziali A."/>
            <person name="Militscher J."/>
            <person name="Miranda M."/>
            <person name="Nguyen M."/>
            <person name="Nierman W.C."/>
            <person name="Osborne B.I."/>
            <person name="Pai G."/>
            <person name="Peterson J."/>
            <person name="Pham P.K."/>
            <person name="Rizzo M."/>
            <person name="Rooney T."/>
            <person name="Rowley D."/>
            <person name="Sakano H."/>
            <person name="Salzberg S.L."/>
            <person name="Schwartz J.R."/>
            <person name="Shinn P."/>
            <person name="Southwick A.M."/>
            <person name="Sun H."/>
            <person name="Tallon L.J."/>
            <person name="Tambunga G."/>
            <person name="Toriumi M.J."/>
            <person name="Town C.D."/>
            <person name="Utterback T."/>
            <person name="Van Aken S."/>
            <person name="Vaysberg M."/>
            <person name="Vysotskaia V.S."/>
            <person name="Walker M."/>
            <person name="Wu D."/>
            <person name="Yu G."/>
            <person name="Fraser C.M."/>
            <person name="Venter J.C."/>
            <person name="Davis R.W."/>
        </authorList>
    </citation>
    <scope>NUCLEOTIDE SEQUENCE [LARGE SCALE GENOMIC DNA]</scope>
    <source>
        <strain>cv. Columbia</strain>
    </source>
</reference>
<reference key="3">
    <citation type="journal article" date="2017" name="Plant J.">
        <title>Araport11: a complete reannotation of the Arabidopsis thaliana reference genome.</title>
        <authorList>
            <person name="Cheng C.Y."/>
            <person name="Krishnakumar V."/>
            <person name="Chan A.P."/>
            <person name="Thibaud-Nissen F."/>
            <person name="Schobel S."/>
            <person name="Town C.D."/>
        </authorList>
    </citation>
    <scope>GENOME REANNOTATION</scope>
    <source>
        <strain>cv. Columbia</strain>
    </source>
</reference>
<reference key="4">
    <citation type="journal article" date="2003" name="Science">
        <title>Empirical analysis of transcriptional activity in the Arabidopsis genome.</title>
        <authorList>
            <person name="Yamada K."/>
            <person name="Lim J."/>
            <person name="Dale J.M."/>
            <person name="Chen H."/>
            <person name="Shinn P."/>
            <person name="Palm C.J."/>
            <person name="Southwick A.M."/>
            <person name="Wu H.C."/>
            <person name="Kim C.J."/>
            <person name="Nguyen M."/>
            <person name="Pham P.K."/>
            <person name="Cheuk R.F."/>
            <person name="Karlin-Newmann G."/>
            <person name="Liu S.X."/>
            <person name="Lam B."/>
            <person name="Sakano H."/>
            <person name="Wu T."/>
            <person name="Yu G."/>
            <person name="Miranda M."/>
            <person name="Quach H.L."/>
            <person name="Tripp M."/>
            <person name="Chang C.H."/>
            <person name="Lee J.M."/>
            <person name="Toriumi M.J."/>
            <person name="Chan M.M."/>
            <person name="Tang C.C."/>
            <person name="Onodera C.S."/>
            <person name="Deng J.M."/>
            <person name="Akiyama K."/>
            <person name="Ansari Y."/>
            <person name="Arakawa T."/>
            <person name="Banh J."/>
            <person name="Banno F."/>
            <person name="Bowser L."/>
            <person name="Brooks S.Y."/>
            <person name="Carninci P."/>
            <person name="Chao Q."/>
            <person name="Choy N."/>
            <person name="Enju A."/>
            <person name="Goldsmith A.D."/>
            <person name="Gurjal M."/>
            <person name="Hansen N.F."/>
            <person name="Hayashizaki Y."/>
            <person name="Johnson-Hopson C."/>
            <person name="Hsuan V.W."/>
            <person name="Iida K."/>
            <person name="Karnes M."/>
            <person name="Khan S."/>
            <person name="Koesema E."/>
            <person name="Ishida J."/>
            <person name="Jiang P.X."/>
            <person name="Jones T."/>
            <person name="Kawai J."/>
            <person name="Kamiya A."/>
            <person name="Meyers C."/>
            <person name="Nakajima M."/>
            <person name="Narusaka M."/>
            <person name="Seki M."/>
            <person name="Sakurai T."/>
            <person name="Satou M."/>
            <person name="Tamse R."/>
            <person name="Vaysberg M."/>
            <person name="Wallender E.K."/>
            <person name="Wong C."/>
            <person name="Yamamura Y."/>
            <person name="Yuan S."/>
            <person name="Shinozaki K."/>
            <person name="Davis R.W."/>
            <person name="Theologis A."/>
            <person name="Ecker J.R."/>
        </authorList>
    </citation>
    <scope>NUCLEOTIDE SEQUENCE [LARGE SCALE MRNA] (ISOFORM 1)</scope>
    <source>
        <strain>cv. Columbia</strain>
    </source>
</reference>
<reference key="5">
    <citation type="submission" date="2006-07" db="EMBL/GenBank/DDBJ databases">
        <title>Large-scale analysis of RIKEN Arabidopsis full-length (RAFL) cDNAs.</title>
        <authorList>
            <person name="Totoki Y."/>
            <person name="Seki M."/>
            <person name="Ishida J."/>
            <person name="Nakajima M."/>
            <person name="Enju A."/>
            <person name="Kamiya A."/>
            <person name="Narusaka M."/>
            <person name="Shin-i T."/>
            <person name="Nakagawa M."/>
            <person name="Sakamoto N."/>
            <person name="Oishi K."/>
            <person name="Kohara Y."/>
            <person name="Kobayashi M."/>
            <person name="Toyoda A."/>
            <person name="Sakaki Y."/>
            <person name="Sakurai T."/>
            <person name="Iida K."/>
            <person name="Akiyama K."/>
            <person name="Satou M."/>
            <person name="Toyoda T."/>
            <person name="Konagaya A."/>
            <person name="Carninci P."/>
            <person name="Kawai J."/>
            <person name="Hayashizaki Y."/>
            <person name="Shinozaki K."/>
        </authorList>
    </citation>
    <scope>NUCLEOTIDE SEQUENCE [LARGE SCALE MRNA] (ISOFORM 1)</scope>
    <source>
        <strain>cv. Columbia</strain>
    </source>
</reference>
<reference key="6">
    <citation type="journal article" date="2007" name="Plant Cell">
        <title>Proteome analysis of Arabidopsis leaf peroxisomes reveals novel targeting peptides, metabolic pathways, and defense mechanisms.</title>
        <authorList>
            <person name="Reumann S."/>
            <person name="Babujee L."/>
            <person name="Ma C."/>
            <person name="Wienkoop S."/>
            <person name="Siemsen T."/>
            <person name="Antonicelli G.E."/>
            <person name="Rasche N."/>
            <person name="Lueder F."/>
            <person name="Weckwerth W."/>
            <person name="Jahn O."/>
        </authorList>
    </citation>
    <scope>IDENTIFICATION BY MASS SPECTROMETRY</scope>
</reference>
<reference key="7">
    <citation type="journal article" date="2009" name="DNA Res.">
        <title>Analysis of multiple occurrences of alternative splicing events in Arabidopsis thaliana using novel sequenced full-length cDNAs.</title>
        <authorList>
            <person name="Iida K."/>
            <person name="Fukami-Kobayashi K."/>
            <person name="Toyoda A."/>
            <person name="Sakaki Y."/>
            <person name="Kobayashi M."/>
            <person name="Seki M."/>
            <person name="Shinozaki K."/>
        </authorList>
    </citation>
    <scope>NUCLEOTIDE SEQUENCE [LARGE SCALE MRNA] OF 103-386 (ISOFORM 1)</scope>
    <source>
        <strain>cv. Columbia</strain>
        <tissue>Flower</tissue>
        <tissue>Silique</tissue>
    </source>
</reference>
<reference key="8">
    <citation type="journal article" date="2008" name="Plant Cell">
        <title>A cytosolic pathway for the conversion of hydroxypyruvate to glycerate during photorespiration in Arabidopsis.</title>
        <authorList>
            <person name="Timm S."/>
            <person name="Nunes-Nesi A."/>
            <person name="Paernik T."/>
            <person name="Morgenthal K."/>
            <person name="Wienkoop S."/>
            <person name="Keerberg O."/>
            <person name="Weckwerth W."/>
            <person name="Kleczkowski L.A."/>
            <person name="Fernie A.R."/>
            <person name="Bauwe H."/>
        </authorList>
    </citation>
    <scope>FUNCTION</scope>
    <scope>DISRUPTION PHENOTYPE</scope>
    <scope>CATALYTIC ACTIVITY</scope>
    <scope>ACTIVITY REGULATION</scope>
</reference>
<reference key="9">
    <citation type="journal article" date="2009" name="Mol. Plant">
        <title>Shoot-specific down-regulation of protein farnesyltransferase (alpha-subunit) for yield protection against drought in canola.</title>
        <authorList>
            <person name="Wang Y."/>
            <person name="Beaith M."/>
            <person name="Chalifoux M."/>
            <person name="Ying J."/>
            <person name="Uchacz T."/>
            <person name="Sarvas C."/>
            <person name="Griffiths R."/>
            <person name="Kuzma M."/>
            <person name="Wan J."/>
            <person name="Huang Y."/>
        </authorList>
    </citation>
    <scope>CATALYTIC ACTIVITY</scope>
    <scope>TISSUE SPECIFICITY</scope>
    <scope>INDUCTION BY DROUGHT AND LIGHT</scope>
</reference>
<reference key="10">
    <citation type="journal article" date="2010" name="Plant Mol. Biol.">
        <title>Fatty acid beta-oxidation in germinating Arabidopsis seeds is supported by peroxisomal hydroxypyruvate reductase when malate dehydrogenase is absent.</title>
        <authorList>
            <person name="Pracharoenwattana I."/>
            <person name="Zhou W."/>
            <person name="Smith S.M."/>
        </authorList>
    </citation>
    <scope>FUNCTION</scope>
</reference>
<reference key="11">
    <citation type="journal article" date="2011" name="Plant Physiol.">
        <title>The hydroxypyruvate-reducing system in Arabidopsis: multiple enzymes for the same end.</title>
        <authorList>
            <person name="Timm S."/>
            <person name="Florian A."/>
            <person name="Jahnke K."/>
            <person name="Nunes-Nesi A."/>
            <person name="Fernie A.R."/>
            <person name="Bauwe H."/>
        </authorList>
    </citation>
    <scope>FUNCTION</scope>
    <source>
        <strain>cv. Columbia</strain>
        <strain>cv. Landsberg erecta</strain>
    </source>
</reference>
<reference key="12">
    <citation type="journal article" date="2011" name="Photosyn. Res.">
        <title>Peroxisomal hydroxypyruvate reductase is not essential for photorespiration in Arabidopsis but its absence causes an increase in the stoichiometry of photorespiratory CO2 release.</title>
        <authorList>
            <person name="Cousins A.B."/>
            <person name="Walker B.J."/>
            <person name="Pracharoenwattana I."/>
            <person name="Smith S.M."/>
            <person name="Badger M.R."/>
        </authorList>
    </citation>
    <scope>FUNCTION</scope>
    <scope>DISRUPTION PHENOTYPE</scope>
</reference>
<keyword id="KW-0025">Alternative splicing</keyword>
<keyword id="KW-0323">Glycolate pathway</keyword>
<keyword id="KW-0520">NAD</keyword>
<keyword id="KW-0560">Oxidoreductase</keyword>
<keyword id="KW-0576">Peroxisome</keyword>
<keyword id="KW-0601">Photorespiration</keyword>
<keyword id="KW-0670">Pyruvate</keyword>
<keyword id="KW-1185">Reference proteome</keyword>
<organism>
    <name type="scientific">Arabidopsis thaliana</name>
    <name type="common">Mouse-ear cress</name>
    <dbReference type="NCBI Taxonomy" id="3702"/>
    <lineage>
        <taxon>Eukaryota</taxon>
        <taxon>Viridiplantae</taxon>
        <taxon>Streptophyta</taxon>
        <taxon>Embryophyta</taxon>
        <taxon>Tracheophyta</taxon>
        <taxon>Spermatophyta</taxon>
        <taxon>Magnoliopsida</taxon>
        <taxon>eudicotyledons</taxon>
        <taxon>Gunneridae</taxon>
        <taxon>Pentapetalae</taxon>
        <taxon>rosids</taxon>
        <taxon>malvids</taxon>
        <taxon>Brassicales</taxon>
        <taxon>Brassicaceae</taxon>
        <taxon>Camelineae</taxon>
        <taxon>Arabidopsis</taxon>
    </lineage>
</organism>